<protein>
    <recommendedName>
        <fullName>Large cysteine-rich periplasmic protein OmcB</fullName>
        <shortName>Large-CRP</shortName>
    </recommendedName>
    <alternativeName>
        <fullName>60 kDa CRP</fullName>
    </alternativeName>
    <alternativeName>
        <fullName>60 kDa outer membrane protein</fullName>
    </alternativeName>
    <alternativeName>
        <fullName>Cysteine-rich outer membrane protein</fullName>
    </alternativeName>
</protein>
<proteinExistence type="inferred from homology"/>
<evidence type="ECO:0000250" key="1"/>
<evidence type="ECO:0000255" key="2"/>
<evidence type="ECO:0000305" key="3"/>
<gene>
    <name type="primary">omcB</name>
    <name type="synonym">omp2</name>
    <name type="ordered locus">CCA_00185</name>
</gene>
<sequence length="558" mass="60214">MSKLFRRVVTVLALTSMASSFASGKIEAAAAESLATRFIASAENSDDNISQRKAKKVRFGRNKYQKQEQKNNGPYCDKEFYPCQDGSCQSSVDTKQEPCYGKMYCVRVSDDSNVEISQAVPEYATVGSPYPIEILAVGKRDCVNVVITQQLPCEVEFISSDPATTPTSDSKLIWTIDRLGQGERCKITVWVKPLKEGCCFTAATVCACPELRSYTKCGQPAICIKQEGPECACLRCPVCYKIEVTNTGSAIARGVVVDNPVPDGYSHPSGQRVLSFNLGDMRPGDTKCFTVEFCPQKRGKITNVATVSYCGGHKCSANVTTVINEPCVQVNISGNDWSYVCKPVEYTIVVSNPGDLKLYDVVIEDLIPSGITILEAPGAEICCNKAVWCIKEMCPGETLQFKVVAKAQTPGKFTNQVSVKTNSDCGSCTSCAEVTTHWKGLAATHMCVIDTNDPICVGENTVYRICVTNRGSAEDTNVSLILKFSKELQPVSSSGPTKGTITGNTVVFDALPKLGSKESVEFSVTLKGVAPGDARGEAILSSDTLTVPVADTENTHVY</sequence>
<feature type="signal peptide" evidence="2">
    <location>
        <begin position="1"/>
        <end position="22"/>
    </location>
</feature>
<feature type="propeptide" id="PRO_0000248864" evidence="2">
    <location>
        <begin position="23"/>
        <end position="40"/>
    </location>
</feature>
<feature type="chain" id="PRO_0000248865" description="Large cysteine-rich periplasmic protein OmcB">
    <location>
        <begin position="41"/>
        <end position="558"/>
    </location>
</feature>
<organism>
    <name type="scientific">Chlamydia caviae (strain ATCC VR-813 / DSM 19441 / 03DC25 / GPIC)</name>
    <name type="common">Chlamydophila caviae</name>
    <dbReference type="NCBI Taxonomy" id="227941"/>
    <lineage>
        <taxon>Bacteria</taxon>
        <taxon>Pseudomonadati</taxon>
        <taxon>Chlamydiota</taxon>
        <taxon>Chlamydiia</taxon>
        <taxon>Chlamydiales</taxon>
        <taxon>Chlamydiaceae</taxon>
        <taxon>Chlamydia/Chlamydophila group</taxon>
        <taxon>Chlamydia</taxon>
    </lineage>
</organism>
<keyword id="KW-0133">Cell shape</keyword>
<keyword id="KW-1015">Disulfide bond</keyword>
<keyword id="KW-0574">Periplasm</keyword>
<keyword id="KW-0732">Signal</keyword>
<reference key="1">
    <citation type="journal article" date="1996" name="Gene">
        <title>Sequence analysis of the omp2 region of Chlamydia psittaci strain GPIC: structural and functional implications.</title>
        <authorList>
            <person name="Hsia R.-C."/>
            <person name="Bavoil P.M."/>
        </authorList>
    </citation>
    <scope>NUCLEOTIDE SEQUENCE [GENOMIC DNA]</scope>
    <source>
        <strain>ATCC VR-813 / DSM 19441 / 03DC25 / GPIC</strain>
    </source>
</reference>
<reference key="2">
    <citation type="journal article" date="2003" name="Nucleic Acids Res.">
        <title>Genome sequence of Chlamydophila caviae (Chlamydia psittaci GPIC): examining the role of niche-specific genes in the evolution of the Chlamydiaceae.</title>
        <authorList>
            <person name="Read T.D."/>
            <person name="Myers G.S.A."/>
            <person name="Brunham R.C."/>
            <person name="Nelson W.C."/>
            <person name="Paulsen I.T."/>
            <person name="Heidelberg J.F."/>
            <person name="Holtzapple E.K."/>
            <person name="Khouri H.M."/>
            <person name="Federova N.B."/>
            <person name="Carty H.A."/>
            <person name="Umayam L.A."/>
            <person name="Haft D.H."/>
            <person name="Peterson J.D."/>
            <person name="Beanan M.J."/>
            <person name="White O."/>
            <person name="Salzberg S.L."/>
            <person name="Hsia R.-C."/>
            <person name="McClarty G."/>
            <person name="Rank R.G."/>
            <person name="Bavoil P.M."/>
            <person name="Fraser C.M."/>
        </authorList>
    </citation>
    <scope>NUCLEOTIDE SEQUENCE [LARGE SCALE GENOMIC DNA]</scope>
    <source>
        <strain>ATCC VR-813 / DSM 19441 / 03DC25 / GPIC</strain>
    </source>
</reference>
<dbReference type="EMBL" id="U41759">
    <property type="protein sequence ID" value="AAB41143.1"/>
    <property type="molecule type" value="Genomic_DNA"/>
</dbReference>
<dbReference type="EMBL" id="AE015925">
    <property type="protein sequence ID" value="AAP04936.1"/>
    <property type="molecule type" value="Genomic_DNA"/>
</dbReference>
<dbReference type="RefSeq" id="WP_011006157.1">
    <property type="nucleotide sequence ID" value="NC_003361.3"/>
</dbReference>
<dbReference type="STRING" id="227941.CCA_00185"/>
<dbReference type="KEGG" id="cca:CCA_00185"/>
<dbReference type="eggNOG" id="COG1361">
    <property type="taxonomic scope" value="Bacteria"/>
</dbReference>
<dbReference type="HOGENOM" id="CLU_029611_0_0_0"/>
<dbReference type="OrthoDB" id="16744at2"/>
<dbReference type="Proteomes" id="UP000002193">
    <property type="component" value="Chromosome"/>
</dbReference>
<dbReference type="GO" id="GO:0042597">
    <property type="term" value="C:periplasmic space"/>
    <property type="evidence" value="ECO:0007669"/>
    <property type="project" value="UniProtKB-SubCell"/>
</dbReference>
<dbReference type="GO" id="GO:0005201">
    <property type="term" value="F:extracellular matrix structural constituent"/>
    <property type="evidence" value="ECO:0007669"/>
    <property type="project" value="InterPro"/>
</dbReference>
<dbReference type="GO" id="GO:0008360">
    <property type="term" value="P:regulation of cell shape"/>
    <property type="evidence" value="ECO:0007669"/>
    <property type="project" value="UniProtKB-KW"/>
</dbReference>
<dbReference type="InterPro" id="IPR003506">
    <property type="entry name" value="Chlam_OMP6"/>
</dbReference>
<dbReference type="InterPro" id="IPR051172">
    <property type="entry name" value="Chlamydia_OmcB"/>
</dbReference>
<dbReference type="InterPro" id="IPR047589">
    <property type="entry name" value="DUF11_rpt"/>
</dbReference>
<dbReference type="InterPro" id="IPR001434">
    <property type="entry name" value="OmcB-like_DUF11"/>
</dbReference>
<dbReference type="NCBIfam" id="TIGR01451">
    <property type="entry name" value="B_ant_repeat"/>
    <property type="match status" value="1"/>
</dbReference>
<dbReference type="PANTHER" id="PTHR34819">
    <property type="entry name" value="LARGE CYSTEINE-RICH PERIPLASMIC PROTEIN OMCB"/>
    <property type="match status" value="1"/>
</dbReference>
<dbReference type="PANTHER" id="PTHR34819:SF4">
    <property type="entry name" value="LARGE CYSTEINE-RICH PERIPLASMIC PROTEIN OMCB"/>
    <property type="match status" value="1"/>
</dbReference>
<dbReference type="Pfam" id="PF03504">
    <property type="entry name" value="Chlam_OMP6"/>
    <property type="match status" value="1"/>
</dbReference>
<dbReference type="Pfam" id="PF01345">
    <property type="entry name" value="DUF11"/>
    <property type="match status" value="3"/>
</dbReference>
<dbReference type="PRINTS" id="PR01336">
    <property type="entry name" value="CHLAMIDIAOM6"/>
</dbReference>
<accession>P94664</accession>
<accession>Q7BYF2</accession>
<name>OMCB_CHLCV</name>
<comment type="function">
    <text evidence="1">In elementary bodies (EBs, the infectious stage, which is able to survive outside the host cell) provides the structural integrity of the outer envelope through disulfide cross-links with the small cysteine-rich protein and the major outer membrane porin. It has been described in publications as the Sarkosyl-insoluble COMC (Chlamydia outer membrane complex), and serves as the functional equivalent of peptidoglycan. It is present but the disulfide bonds are reduced in reticulate bodies (RBs) (By similarity).</text>
</comment>
<comment type="subunit">
    <text evidence="1">Part of a disulfide cross-linked outer membrane complex (COMC) composed of the major outer membrane porin (MOMP), the small cysteine-rich protein (OmcA) and the large cysteine-rich periplasmic protein (OmcB).</text>
</comment>
<comment type="subcellular location">
    <subcellularLocation>
        <location evidence="3">Periplasm</location>
    </subcellularLocation>
</comment>
<comment type="caution">
    <text evidence="3">Was thought to be an outer membrane protein as it is part of a disulfide cross-linked complex that is insoluble in the detergent Sarkosyl; however based on experiments in C.psittaci it is likely to be periplasmic.</text>
</comment>